<sequence>MTFPPLKSPLKFYAVVPTADWVGRMVKAGADTVQLRCKALHGDELKREIARCAAACQGSRTQLFINDHWREAIEAGAYGVHLGQEDMDTADLAAIAAAGLRLGLSTHSVAELDRALSVHPSYIASGAIFPTTTKQMPTAPQGLDKLREYVKQAGGTPVVAIGGIDLNNARAVLATGVSSLAAVRAVTEAANPEAVVKAFQALWDG</sequence>
<keyword id="KW-0460">Magnesium</keyword>
<keyword id="KW-0479">Metal-binding</keyword>
<keyword id="KW-1185">Reference proteome</keyword>
<keyword id="KW-0784">Thiamine biosynthesis</keyword>
<keyword id="KW-0808">Transferase</keyword>
<reference key="1">
    <citation type="journal article" date="2000" name="Science">
        <title>Complete genome sequence of Neisseria meningitidis serogroup B strain MC58.</title>
        <authorList>
            <person name="Tettelin H."/>
            <person name="Saunders N.J."/>
            <person name="Heidelberg J.F."/>
            <person name="Jeffries A.C."/>
            <person name="Nelson K.E."/>
            <person name="Eisen J.A."/>
            <person name="Ketchum K.A."/>
            <person name="Hood D.W."/>
            <person name="Peden J.F."/>
            <person name="Dodson R.J."/>
            <person name="Nelson W.C."/>
            <person name="Gwinn M.L."/>
            <person name="DeBoy R.T."/>
            <person name="Peterson J.D."/>
            <person name="Hickey E.K."/>
            <person name="Haft D.H."/>
            <person name="Salzberg S.L."/>
            <person name="White O."/>
            <person name="Fleischmann R.D."/>
            <person name="Dougherty B.A."/>
            <person name="Mason T.M."/>
            <person name="Ciecko A."/>
            <person name="Parksey D.S."/>
            <person name="Blair E."/>
            <person name="Cittone H."/>
            <person name="Clark E.B."/>
            <person name="Cotton M.D."/>
            <person name="Utterback T.R."/>
            <person name="Khouri H.M."/>
            <person name="Qin H."/>
            <person name="Vamathevan J.J."/>
            <person name="Gill J."/>
            <person name="Scarlato V."/>
            <person name="Masignani V."/>
            <person name="Pizza M."/>
            <person name="Grandi G."/>
            <person name="Sun L."/>
            <person name="Smith H.O."/>
            <person name="Fraser C.M."/>
            <person name="Moxon E.R."/>
            <person name="Rappuoli R."/>
            <person name="Venter J.C."/>
        </authorList>
    </citation>
    <scope>NUCLEOTIDE SEQUENCE [LARGE SCALE GENOMIC DNA]</scope>
    <source>
        <strain>ATCC BAA-335 / MC58</strain>
    </source>
</reference>
<protein>
    <recommendedName>
        <fullName evidence="1">Thiamine-phosphate synthase</fullName>
        <shortName evidence="1">TP synthase</shortName>
        <shortName evidence="1">TPS</shortName>
        <ecNumber evidence="1">2.5.1.3</ecNumber>
    </recommendedName>
    <alternativeName>
        <fullName evidence="1">Thiamine-phosphate pyrophosphorylase</fullName>
        <shortName evidence="1">TMP pyrophosphorylase</shortName>
        <shortName evidence="1">TMP-PPase</shortName>
    </alternativeName>
</protein>
<dbReference type="EC" id="2.5.1.3" evidence="1"/>
<dbReference type="EMBL" id="AE002098">
    <property type="protein sequence ID" value="AAF42388.1"/>
    <property type="molecule type" value="Genomic_DNA"/>
</dbReference>
<dbReference type="PIR" id="A81011">
    <property type="entry name" value="A81011"/>
</dbReference>
<dbReference type="RefSeq" id="NP_275059.1">
    <property type="nucleotide sequence ID" value="NC_003112.2"/>
</dbReference>
<dbReference type="RefSeq" id="WP_002225708.1">
    <property type="nucleotide sequence ID" value="NC_003112.2"/>
</dbReference>
<dbReference type="SMR" id="Q9JXF7"/>
<dbReference type="FunCoup" id="Q9JXF7">
    <property type="interactions" value="411"/>
</dbReference>
<dbReference type="STRING" id="122586.NMB2069"/>
<dbReference type="PaxDb" id="122586-NMB2069"/>
<dbReference type="KEGG" id="nme:NMB2069"/>
<dbReference type="PATRIC" id="fig|122586.8.peg.2649"/>
<dbReference type="HOGENOM" id="CLU_018272_3_3_4"/>
<dbReference type="InParanoid" id="Q9JXF7"/>
<dbReference type="OrthoDB" id="9789949at2"/>
<dbReference type="UniPathway" id="UPA00060">
    <property type="reaction ID" value="UER00141"/>
</dbReference>
<dbReference type="Proteomes" id="UP000000425">
    <property type="component" value="Chromosome"/>
</dbReference>
<dbReference type="GO" id="GO:0005737">
    <property type="term" value="C:cytoplasm"/>
    <property type="evidence" value="ECO:0000318"/>
    <property type="project" value="GO_Central"/>
</dbReference>
<dbReference type="GO" id="GO:0000287">
    <property type="term" value="F:magnesium ion binding"/>
    <property type="evidence" value="ECO:0007669"/>
    <property type="project" value="UniProtKB-UniRule"/>
</dbReference>
<dbReference type="GO" id="GO:0004789">
    <property type="term" value="F:thiamine-phosphate diphosphorylase activity"/>
    <property type="evidence" value="ECO:0000318"/>
    <property type="project" value="GO_Central"/>
</dbReference>
<dbReference type="GO" id="GO:0009228">
    <property type="term" value="P:thiamine biosynthetic process"/>
    <property type="evidence" value="ECO:0000318"/>
    <property type="project" value="GO_Central"/>
</dbReference>
<dbReference type="GO" id="GO:0009229">
    <property type="term" value="P:thiamine diphosphate biosynthetic process"/>
    <property type="evidence" value="ECO:0007669"/>
    <property type="project" value="UniProtKB-UniRule"/>
</dbReference>
<dbReference type="CDD" id="cd00564">
    <property type="entry name" value="TMP_TenI"/>
    <property type="match status" value="1"/>
</dbReference>
<dbReference type="FunFam" id="3.20.20.70:FF:000064">
    <property type="entry name" value="Thiamine-phosphate synthase"/>
    <property type="match status" value="1"/>
</dbReference>
<dbReference type="Gene3D" id="3.20.20.70">
    <property type="entry name" value="Aldolase class I"/>
    <property type="match status" value="1"/>
</dbReference>
<dbReference type="HAMAP" id="MF_00097">
    <property type="entry name" value="TMP_synthase"/>
    <property type="match status" value="1"/>
</dbReference>
<dbReference type="InterPro" id="IPR013785">
    <property type="entry name" value="Aldolase_TIM"/>
</dbReference>
<dbReference type="InterPro" id="IPR036206">
    <property type="entry name" value="ThiamineP_synth_sf"/>
</dbReference>
<dbReference type="InterPro" id="IPR022998">
    <property type="entry name" value="ThiamineP_synth_TenI"/>
</dbReference>
<dbReference type="InterPro" id="IPR034291">
    <property type="entry name" value="TMP_synthase"/>
</dbReference>
<dbReference type="NCBIfam" id="NF002904">
    <property type="entry name" value="PRK03512.1"/>
    <property type="match status" value="1"/>
</dbReference>
<dbReference type="NCBIfam" id="TIGR00693">
    <property type="entry name" value="thiE"/>
    <property type="match status" value="1"/>
</dbReference>
<dbReference type="PANTHER" id="PTHR20857">
    <property type="entry name" value="THIAMINE-PHOSPHATE PYROPHOSPHORYLASE"/>
    <property type="match status" value="1"/>
</dbReference>
<dbReference type="PANTHER" id="PTHR20857:SF15">
    <property type="entry name" value="THIAMINE-PHOSPHATE SYNTHASE"/>
    <property type="match status" value="1"/>
</dbReference>
<dbReference type="Pfam" id="PF02581">
    <property type="entry name" value="TMP-TENI"/>
    <property type="match status" value="1"/>
</dbReference>
<dbReference type="SUPFAM" id="SSF51391">
    <property type="entry name" value="Thiamin phosphate synthase"/>
    <property type="match status" value="1"/>
</dbReference>
<proteinExistence type="inferred from homology"/>
<comment type="function">
    <text evidence="1">Condenses 4-methyl-5-(beta-hydroxyethyl)thiazole monophosphate (THZ-P) and 2-methyl-4-amino-5-hydroxymethyl pyrimidine pyrophosphate (HMP-PP) to form thiamine monophosphate (TMP).</text>
</comment>
<comment type="catalytic activity">
    <reaction evidence="1">
        <text>2-[(2R,5Z)-2-carboxy-4-methylthiazol-5(2H)-ylidene]ethyl phosphate + 4-amino-2-methyl-5-(diphosphooxymethyl)pyrimidine + 2 H(+) = thiamine phosphate + CO2 + diphosphate</text>
        <dbReference type="Rhea" id="RHEA:47844"/>
        <dbReference type="ChEBI" id="CHEBI:15378"/>
        <dbReference type="ChEBI" id="CHEBI:16526"/>
        <dbReference type="ChEBI" id="CHEBI:33019"/>
        <dbReference type="ChEBI" id="CHEBI:37575"/>
        <dbReference type="ChEBI" id="CHEBI:57841"/>
        <dbReference type="ChEBI" id="CHEBI:62899"/>
        <dbReference type="EC" id="2.5.1.3"/>
    </reaction>
</comment>
<comment type="catalytic activity">
    <reaction evidence="1">
        <text>2-(2-carboxy-4-methylthiazol-5-yl)ethyl phosphate + 4-amino-2-methyl-5-(diphosphooxymethyl)pyrimidine + 2 H(+) = thiamine phosphate + CO2 + diphosphate</text>
        <dbReference type="Rhea" id="RHEA:47848"/>
        <dbReference type="ChEBI" id="CHEBI:15378"/>
        <dbReference type="ChEBI" id="CHEBI:16526"/>
        <dbReference type="ChEBI" id="CHEBI:33019"/>
        <dbReference type="ChEBI" id="CHEBI:37575"/>
        <dbReference type="ChEBI" id="CHEBI:57841"/>
        <dbReference type="ChEBI" id="CHEBI:62890"/>
        <dbReference type="EC" id="2.5.1.3"/>
    </reaction>
</comment>
<comment type="catalytic activity">
    <reaction evidence="1">
        <text>4-methyl-5-(2-phosphooxyethyl)-thiazole + 4-amino-2-methyl-5-(diphosphooxymethyl)pyrimidine + H(+) = thiamine phosphate + diphosphate</text>
        <dbReference type="Rhea" id="RHEA:22328"/>
        <dbReference type="ChEBI" id="CHEBI:15378"/>
        <dbReference type="ChEBI" id="CHEBI:33019"/>
        <dbReference type="ChEBI" id="CHEBI:37575"/>
        <dbReference type="ChEBI" id="CHEBI:57841"/>
        <dbReference type="ChEBI" id="CHEBI:58296"/>
        <dbReference type="EC" id="2.5.1.3"/>
    </reaction>
</comment>
<comment type="cofactor">
    <cofactor evidence="1">
        <name>Mg(2+)</name>
        <dbReference type="ChEBI" id="CHEBI:18420"/>
    </cofactor>
    <text evidence="1">Binds 1 Mg(2+) ion per subunit.</text>
</comment>
<comment type="pathway">
    <text evidence="1">Cofactor biosynthesis; thiamine diphosphate biosynthesis; thiamine phosphate from 4-amino-2-methyl-5-diphosphomethylpyrimidine and 4-methyl-5-(2-phosphoethyl)-thiazole: step 1/1.</text>
</comment>
<comment type="similarity">
    <text evidence="1">Belongs to the thiamine-phosphate synthase family.</text>
</comment>
<gene>
    <name evidence="1" type="primary">thiE</name>
    <name type="ordered locus">NMB2069</name>
</gene>
<accession>Q9JXF7</accession>
<feature type="chain" id="PRO_0000157030" description="Thiamine-phosphate synthase">
    <location>
        <begin position="1"/>
        <end position="205"/>
    </location>
</feature>
<feature type="binding site" evidence="1">
    <location>
        <begin position="34"/>
        <end position="38"/>
    </location>
    <ligand>
        <name>4-amino-2-methyl-5-(diphosphooxymethyl)pyrimidine</name>
        <dbReference type="ChEBI" id="CHEBI:57841"/>
    </ligand>
</feature>
<feature type="binding site" evidence="1">
    <location>
        <position position="66"/>
    </location>
    <ligand>
        <name>4-amino-2-methyl-5-(diphosphooxymethyl)pyrimidine</name>
        <dbReference type="ChEBI" id="CHEBI:57841"/>
    </ligand>
</feature>
<feature type="binding site" evidence="1">
    <location>
        <position position="67"/>
    </location>
    <ligand>
        <name>Mg(2+)</name>
        <dbReference type="ChEBI" id="CHEBI:18420"/>
    </ligand>
</feature>
<feature type="binding site" evidence="1">
    <location>
        <position position="86"/>
    </location>
    <ligand>
        <name>Mg(2+)</name>
        <dbReference type="ChEBI" id="CHEBI:18420"/>
    </ligand>
</feature>
<feature type="binding site" evidence="1">
    <location>
        <position position="105"/>
    </location>
    <ligand>
        <name>4-amino-2-methyl-5-(diphosphooxymethyl)pyrimidine</name>
        <dbReference type="ChEBI" id="CHEBI:57841"/>
    </ligand>
</feature>
<feature type="binding site" evidence="1">
    <location>
        <begin position="131"/>
        <end position="133"/>
    </location>
    <ligand>
        <name>2-[(2R,5Z)-2-carboxy-4-methylthiazol-5(2H)-ylidene]ethyl phosphate</name>
        <dbReference type="ChEBI" id="CHEBI:62899"/>
    </ligand>
</feature>
<feature type="binding site" evidence="1">
    <location>
        <position position="134"/>
    </location>
    <ligand>
        <name>4-amino-2-methyl-5-(diphosphooxymethyl)pyrimidine</name>
        <dbReference type="ChEBI" id="CHEBI:57841"/>
    </ligand>
</feature>
<feature type="binding site" evidence="1">
    <location>
        <position position="163"/>
    </location>
    <ligand>
        <name>2-[(2R,5Z)-2-carboxy-4-methylthiazol-5(2H)-ylidene]ethyl phosphate</name>
        <dbReference type="ChEBI" id="CHEBI:62899"/>
    </ligand>
</feature>
<evidence type="ECO:0000255" key="1">
    <source>
        <dbReference type="HAMAP-Rule" id="MF_00097"/>
    </source>
</evidence>
<organism>
    <name type="scientific">Neisseria meningitidis serogroup B (strain ATCC BAA-335 / MC58)</name>
    <dbReference type="NCBI Taxonomy" id="122586"/>
    <lineage>
        <taxon>Bacteria</taxon>
        <taxon>Pseudomonadati</taxon>
        <taxon>Pseudomonadota</taxon>
        <taxon>Betaproteobacteria</taxon>
        <taxon>Neisseriales</taxon>
        <taxon>Neisseriaceae</taxon>
        <taxon>Neisseria</taxon>
    </lineage>
</organism>
<name>THIE_NEIMB</name>